<evidence type="ECO:0000250" key="1">
    <source>
        <dbReference type="UniProtKB" id="Q04401"/>
    </source>
</evidence>
<evidence type="ECO:0000250" key="2">
    <source>
        <dbReference type="UniProtKB" id="Q8SZ16"/>
    </source>
</evidence>
<evidence type="ECO:0000250" key="3">
    <source>
        <dbReference type="UniProtKB" id="Q9NRP4"/>
    </source>
</evidence>
<evidence type="ECO:0000255" key="4"/>
<evidence type="ECO:0000305" key="5"/>
<protein>
    <recommendedName>
        <fullName evidence="1">Succinate dehydrogenase assembly factor 3, mitochondrial</fullName>
        <shortName evidence="1">SDH assembly factor 3</shortName>
        <shortName evidence="1">SDHAF3</shortName>
    </recommendedName>
</protein>
<sequence>MPGKHVSRVRALYRRILLLHRALPPDLKALGDQYVKDEFRRHKTVGPGEAQRFLKEWETYAAVLWQQAEDSRQSSTGKACFGTSLPEEKLNDFRDEQIGQLQELMQEATKPNRQFSITESTKPQL</sequence>
<dbReference type="EMBL" id="AK028031">
    <property type="protein sequence ID" value="BAC25710.1"/>
    <property type="molecule type" value="mRNA"/>
</dbReference>
<dbReference type="EMBL" id="AK046436">
    <property type="protein sequence ID" value="BAC32728.1"/>
    <property type="molecule type" value="mRNA"/>
</dbReference>
<dbReference type="CCDS" id="CCDS39423.1"/>
<dbReference type="RefSeq" id="NP_001071181.1">
    <property type="nucleotide sequence ID" value="NM_001077713.2"/>
</dbReference>
<dbReference type="SMR" id="Q8BQU3"/>
<dbReference type="BioGRID" id="214573">
    <property type="interactions" value="9"/>
</dbReference>
<dbReference type="FunCoup" id="Q8BQU3">
    <property type="interactions" value="1076"/>
</dbReference>
<dbReference type="STRING" id="10090.ENSMUSP00000040935"/>
<dbReference type="PhosphoSitePlus" id="Q8BQU3"/>
<dbReference type="PaxDb" id="10090-ENSMUSP00000040935"/>
<dbReference type="ProteomicsDB" id="255506"/>
<dbReference type="Pumba" id="Q8BQU3"/>
<dbReference type="Antibodypedia" id="55557">
    <property type="antibodies" value="68 antibodies from 14 providers"/>
</dbReference>
<dbReference type="Ensembl" id="ENSMUST00000040826.6">
    <property type="protein sequence ID" value="ENSMUSP00000040935.5"/>
    <property type="gene ID" value="ENSMUSG00000042505.7"/>
</dbReference>
<dbReference type="GeneID" id="71238"/>
<dbReference type="KEGG" id="mmu:71238"/>
<dbReference type="UCSC" id="uc009axa.1">
    <property type="organism name" value="mouse"/>
</dbReference>
<dbReference type="AGR" id="MGI:1913288"/>
<dbReference type="CTD" id="57001"/>
<dbReference type="MGI" id="MGI:1913288">
    <property type="gene designation" value="Sdhaf3"/>
</dbReference>
<dbReference type="VEuPathDB" id="HostDB:ENSMUSG00000042505"/>
<dbReference type="eggNOG" id="KOG4100">
    <property type="taxonomic scope" value="Eukaryota"/>
</dbReference>
<dbReference type="GeneTree" id="ENSGT00390000010029"/>
<dbReference type="HOGENOM" id="CLU_102310_2_1_1"/>
<dbReference type="InParanoid" id="Q8BQU3"/>
<dbReference type="OMA" id="WQQTNEN"/>
<dbReference type="OrthoDB" id="278329at2759"/>
<dbReference type="PhylomeDB" id="Q8BQU3"/>
<dbReference type="TreeFam" id="TF105635"/>
<dbReference type="Reactome" id="R-MMU-9854311">
    <property type="pathway name" value="Maturation of TCA enzymes and regulation of TCA cycle"/>
</dbReference>
<dbReference type="BioGRID-ORCS" id="71238">
    <property type="hits" value="0 hits in 77 CRISPR screens"/>
</dbReference>
<dbReference type="ChiTaRS" id="Sdhaf3">
    <property type="organism name" value="mouse"/>
</dbReference>
<dbReference type="PRO" id="PR:Q8BQU3"/>
<dbReference type="Proteomes" id="UP000000589">
    <property type="component" value="Chromosome 6"/>
</dbReference>
<dbReference type="RNAct" id="Q8BQU3">
    <property type="molecule type" value="protein"/>
</dbReference>
<dbReference type="Bgee" id="ENSMUSG00000042505">
    <property type="expression patterns" value="Expressed in facial nucleus and 223 other cell types or tissues"/>
</dbReference>
<dbReference type="ExpressionAtlas" id="Q8BQU3">
    <property type="expression patterns" value="baseline and differential"/>
</dbReference>
<dbReference type="GO" id="GO:0005758">
    <property type="term" value="C:mitochondrial intermembrane space"/>
    <property type="evidence" value="ECO:0000250"/>
    <property type="project" value="HGNC-UCL"/>
</dbReference>
<dbReference type="GO" id="GO:0005759">
    <property type="term" value="C:mitochondrial matrix"/>
    <property type="evidence" value="ECO:0007669"/>
    <property type="project" value="UniProtKB-SubCell"/>
</dbReference>
<dbReference type="GO" id="GO:0034553">
    <property type="term" value="P:mitochondrial respiratory chain complex II assembly"/>
    <property type="evidence" value="ECO:0007669"/>
    <property type="project" value="InterPro"/>
</dbReference>
<dbReference type="CDD" id="cd20270">
    <property type="entry name" value="Complex1_LYR_SDHAF3_LYRM10"/>
    <property type="match status" value="1"/>
</dbReference>
<dbReference type="InterPro" id="IPR008381">
    <property type="entry name" value="SDHAF3/Sdh7"/>
</dbReference>
<dbReference type="PANTHER" id="PTHR13137">
    <property type="entry name" value="DC11 ACN9 HOMOLOG"/>
    <property type="match status" value="1"/>
</dbReference>
<dbReference type="PANTHER" id="PTHR13137:SF6">
    <property type="entry name" value="SUCCINATE DEHYDROGENASE ASSEMBLY FACTOR 3, MITOCHONDRIAL"/>
    <property type="match status" value="1"/>
</dbReference>
<dbReference type="Pfam" id="PF13233">
    <property type="entry name" value="Complex1_LYR_2"/>
    <property type="match status" value="1"/>
</dbReference>
<keyword id="KW-0143">Chaperone</keyword>
<keyword id="KW-0496">Mitochondrion</keyword>
<keyword id="KW-1185">Reference proteome</keyword>
<keyword id="KW-0809">Transit peptide</keyword>
<reference key="1">
    <citation type="journal article" date="2005" name="Science">
        <title>The transcriptional landscape of the mammalian genome.</title>
        <authorList>
            <person name="Carninci P."/>
            <person name="Kasukawa T."/>
            <person name="Katayama S."/>
            <person name="Gough J."/>
            <person name="Frith M.C."/>
            <person name="Maeda N."/>
            <person name="Oyama R."/>
            <person name="Ravasi T."/>
            <person name="Lenhard B."/>
            <person name="Wells C."/>
            <person name="Kodzius R."/>
            <person name="Shimokawa K."/>
            <person name="Bajic V.B."/>
            <person name="Brenner S.E."/>
            <person name="Batalov S."/>
            <person name="Forrest A.R."/>
            <person name="Zavolan M."/>
            <person name="Davis M.J."/>
            <person name="Wilming L.G."/>
            <person name="Aidinis V."/>
            <person name="Allen J.E."/>
            <person name="Ambesi-Impiombato A."/>
            <person name="Apweiler R."/>
            <person name="Aturaliya R.N."/>
            <person name="Bailey T.L."/>
            <person name="Bansal M."/>
            <person name="Baxter L."/>
            <person name="Beisel K.W."/>
            <person name="Bersano T."/>
            <person name="Bono H."/>
            <person name="Chalk A.M."/>
            <person name="Chiu K.P."/>
            <person name="Choudhary V."/>
            <person name="Christoffels A."/>
            <person name="Clutterbuck D.R."/>
            <person name="Crowe M.L."/>
            <person name="Dalla E."/>
            <person name="Dalrymple B.P."/>
            <person name="de Bono B."/>
            <person name="Della Gatta G."/>
            <person name="di Bernardo D."/>
            <person name="Down T."/>
            <person name="Engstrom P."/>
            <person name="Fagiolini M."/>
            <person name="Faulkner G."/>
            <person name="Fletcher C.F."/>
            <person name="Fukushima T."/>
            <person name="Furuno M."/>
            <person name="Futaki S."/>
            <person name="Gariboldi M."/>
            <person name="Georgii-Hemming P."/>
            <person name="Gingeras T.R."/>
            <person name="Gojobori T."/>
            <person name="Green R.E."/>
            <person name="Gustincich S."/>
            <person name="Harbers M."/>
            <person name="Hayashi Y."/>
            <person name="Hensch T.K."/>
            <person name="Hirokawa N."/>
            <person name="Hill D."/>
            <person name="Huminiecki L."/>
            <person name="Iacono M."/>
            <person name="Ikeo K."/>
            <person name="Iwama A."/>
            <person name="Ishikawa T."/>
            <person name="Jakt M."/>
            <person name="Kanapin A."/>
            <person name="Katoh M."/>
            <person name="Kawasawa Y."/>
            <person name="Kelso J."/>
            <person name="Kitamura H."/>
            <person name="Kitano H."/>
            <person name="Kollias G."/>
            <person name="Krishnan S.P."/>
            <person name="Kruger A."/>
            <person name="Kummerfeld S.K."/>
            <person name="Kurochkin I.V."/>
            <person name="Lareau L.F."/>
            <person name="Lazarevic D."/>
            <person name="Lipovich L."/>
            <person name="Liu J."/>
            <person name="Liuni S."/>
            <person name="McWilliam S."/>
            <person name="Madan Babu M."/>
            <person name="Madera M."/>
            <person name="Marchionni L."/>
            <person name="Matsuda H."/>
            <person name="Matsuzawa S."/>
            <person name="Miki H."/>
            <person name="Mignone F."/>
            <person name="Miyake S."/>
            <person name="Morris K."/>
            <person name="Mottagui-Tabar S."/>
            <person name="Mulder N."/>
            <person name="Nakano N."/>
            <person name="Nakauchi H."/>
            <person name="Ng P."/>
            <person name="Nilsson R."/>
            <person name="Nishiguchi S."/>
            <person name="Nishikawa S."/>
            <person name="Nori F."/>
            <person name="Ohara O."/>
            <person name="Okazaki Y."/>
            <person name="Orlando V."/>
            <person name="Pang K.C."/>
            <person name="Pavan W.J."/>
            <person name="Pavesi G."/>
            <person name="Pesole G."/>
            <person name="Petrovsky N."/>
            <person name="Piazza S."/>
            <person name="Reed J."/>
            <person name="Reid J.F."/>
            <person name="Ring B.Z."/>
            <person name="Ringwald M."/>
            <person name="Rost B."/>
            <person name="Ruan Y."/>
            <person name="Salzberg S.L."/>
            <person name="Sandelin A."/>
            <person name="Schneider C."/>
            <person name="Schoenbach C."/>
            <person name="Sekiguchi K."/>
            <person name="Semple C.A."/>
            <person name="Seno S."/>
            <person name="Sessa L."/>
            <person name="Sheng Y."/>
            <person name="Shibata Y."/>
            <person name="Shimada H."/>
            <person name="Shimada K."/>
            <person name="Silva D."/>
            <person name="Sinclair B."/>
            <person name="Sperling S."/>
            <person name="Stupka E."/>
            <person name="Sugiura K."/>
            <person name="Sultana R."/>
            <person name="Takenaka Y."/>
            <person name="Taki K."/>
            <person name="Tammoja K."/>
            <person name="Tan S.L."/>
            <person name="Tang S."/>
            <person name="Taylor M.S."/>
            <person name="Tegner J."/>
            <person name="Teichmann S.A."/>
            <person name="Ueda H.R."/>
            <person name="van Nimwegen E."/>
            <person name="Verardo R."/>
            <person name="Wei C.L."/>
            <person name="Yagi K."/>
            <person name="Yamanishi H."/>
            <person name="Zabarovsky E."/>
            <person name="Zhu S."/>
            <person name="Zimmer A."/>
            <person name="Hide W."/>
            <person name="Bult C."/>
            <person name="Grimmond S.M."/>
            <person name="Teasdale R.D."/>
            <person name="Liu E.T."/>
            <person name="Brusic V."/>
            <person name="Quackenbush J."/>
            <person name="Wahlestedt C."/>
            <person name="Mattick J.S."/>
            <person name="Hume D.A."/>
            <person name="Kai C."/>
            <person name="Sasaki D."/>
            <person name="Tomaru Y."/>
            <person name="Fukuda S."/>
            <person name="Kanamori-Katayama M."/>
            <person name="Suzuki M."/>
            <person name="Aoki J."/>
            <person name="Arakawa T."/>
            <person name="Iida J."/>
            <person name="Imamura K."/>
            <person name="Itoh M."/>
            <person name="Kato T."/>
            <person name="Kawaji H."/>
            <person name="Kawagashira N."/>
            <person name="Kawashima T."/>
            <person name="Kojima M."/>
            <person name="Kondo S."/>
            <person name="Konno H."/>
            <person name="Nakano K."/>
            <person name="Ninomiya N."/>
            <person name="Nishio T."/>
            <person name="Okada M."/>
            <person name="Plessy C."/>
            <person name="Shibata K."/>
            <person name="Shiraki T."/>
            <person name="Suzuki S."/>
            <person name="Tagami M."/>
            <person name="Waki K."/>
            <person name="Watahiki A."/>
            <person name="Okamura-Oho Y."/>
            <person name="Suzuki H."/>
            <person name="Kawai J."/>
            <person name="Hayashizaki Y."/>
        </authorList>
    </citation>
    <scope>NUCLEOTIDE SEQUENCE [LARGE SCALE MRNA]</scope>
    <source>
        <strain>C57BL/6J</strain>
        <tissue>Corpora quadrigemina</tissue>
    </source>
</reference>
<proteinExistence type="evidence at transcript level"/>
<accession>Q8BQU3</accession>
<accession>Q8BT21</accession>
<organism>
    <name type="scientific">Mus musculus</name>
    <name type="common">Mouse</name>
    <dbReference type="NCBI Taxonomy" id="10090"/>
    <lineage>
        <taxon>Eukaryota</taxon>
        <taxon>Metazoa</taxon>
        <taxon>Chordata</taxon>
        <taxon>Craniata</taxon>
        <taxon>Vertebrata</taxon>
        <taxon>Euteleostomi</taxon>
        <taxon>Mammalia</taxon>
        <taxon>Eutheria</taxon>
        <taxon>Euarchontoglires</taxon>
        <taxon>Glires</taxon>
        <taxon>Rodentia</taxon>
        <taxon>Myomorpha</taxon>
        <taxon>Muroidea</taxon>
        <taxon>Muridae</taxon>
        <taxon>Murinae</taxon>
        <taxon>Mus</taxon>
        <taxon>Mus</taxon>
    </lineage>
</organism>
<feature type="transit peptide" description="Mitochondrion" evidence="4">
    <location>
        <begin position="1"/>
        <end position="30"/>
    </location>
</feature>
<feature type="chain" id="PRO_0000042654" description="Succinate dehydrogenase assembly factor 3, mitochondrial">
    <location>
        <begin position="31"/>
        <end position="125"/>
    </location>
</feature>
<gene>
    <name evidence="3" type="primary">Sdhaf3</name>
    <name evidence="3" type="synonym">Acn9</name>
</gene>
<comment type="function">
    <text evidence="1 2">Plays an essential role in the assembly of succinate dehydrogenase (SDH), an enzyme complex (also referred to as respiratory complex II) that is a component of both the tricarboxylic acid (TCA) cycle and the mitochondrial electron transport chain, and which couples the oxidation of succinate to fumarate with the reduction of ubiquinone (coenzyme Q) to ubiquinol. Promotes maturation of the iron-sulfur protein subunit Sdhb of the SDH catalytic dimer, protecting it from the deleterious effects of oxidants. May act together with SDHAF1.</text>
</comment>
<comment type="subunit">
    <text evidence="1">Interacts with Sdhb within an Sdha-Sdhb subcomplex.</text>
</comment>
<comment type="subcellular location">
    <subcellularLocation>
        <location evidence="1">Mitochondrion matrix</location>
    </subcellularLocation>
</comment>
<comment type="similarity">
    <text evidence="5">Belongs to the complex I LYR family. SDHAF3 subfamily.</text>
</comment>
<name>SDHF3_MOUSE</name>